<comment type="function">
    <text>Protamines substitute for histones in the chromatin of sperm during the haploid phase of spermatogenesis. They compact sperm DNA into a highly condensed, stable and inactive complex.</text>
</comment>
<comment type="subcellular location">
    <subcellularLocation>
        <location>Nucleus</location>
    </subcellularLocation>
    <subcellularLocation>
        <location>Chromosome</location>
    </subcellularLocation>
</comment>
<comment type="tissue specificity">
    <text>Testis.</text>
</comment>
<comment type="similarity">
    <text evidence="2">Belongs to the protamine P1 family.</text>
</comment>
<organism>
    <name type="scientific">Sminthopsis crassicaudata</name>
    <name type="common">Fat-tailed dunnart</name>
    <name type="synonym">Phascogale crassicaudata</name>
    <dbReference type="NCBI Taxonomy" id="9301"/>
    <lineage>
        <taxon>Eukaryota</taxon>
        <taxon>Metazoa</taxon>
        <taxon>Chordata</taxon>
        <taxon>Craniata</taxon>
        <taxon>Vertebrata</taxon>
        <taxon>Euteleostomi</taxon>
        <taxon>Mammalia</taxon>
        <taxon>Metatheria</taxon>
        <taxon>Dasyuromorphia</taxon>
        <taxon>Dasyuridae</taxon>
        <taxon>Sminthopsis</taxon>
    </lineage>
</organism>
<reference key="1">
    <citation type="journal article" date="1995" name="Proc. R. Soc. B">
        <title>Molecular phylogeny and evolution of marsupial protamine P1 genes.</title>
        <authorList>
            <person name="Retief J.D."/>
            <person name="Krajewski C."/>
            <person name="Westerman M."/>
            <person name="Winkfein R.J."/>
            <person name="Dixon G.H."/>
        </authorList>
    </citation>
    <scope>NUCLEOTIDE SEQUENCE [GENOMIC DNA]</scope>
    <source>
        <tissue>Sperm</tissue>
    </source>
</reference>
<name>HSP1_SMICR</name>
<evidence type="ECO:0000256" key="1">
    <source>
        <dbReference type="SAM" id="MobiDB-lite"/>
    </source>
</evidence>
<evidence type="ECO:0000305" key="2"/>
<feature type="chain" id="PRO_0000191561" description="Sperm protamine P1">
    <location>
        <begin position="1"/>
        <end position="63"/>
    </location>
</feature>
<feature type="region of interest" description="Disordered" evidence="1">
    <location>
        <begin position="1"/>
        <end position="63"/>
    </location>
</feature>
<proteinExistence type="evidence at transcript level"/>
<sequence>MARYRRHSRSRSRSRYRRRRRRRSRHHNRRRTYRRSRRHSRRRRGRRRGYSRRRYSRRGRRRY</sequence>
<dbReference type="EMBL" id="L32743">
    <property type="protein sequence ID" value="AAA99478.1"/>
    <property type="molecule type" value="Genomic_DNA"/>
</dbReference>
<dbReference type="GO" id="GO:0000786">
    <property type="term" value="C:nucleosome"/>
    <property type="evidence" value="ECO:0007669"/>
    <property type="project" value="UniProtKB-KW"/>
</dbReference>
<dbReference type="GO" id="GO:0005634">
    <property type="term" value="C:nucleus"/>
    <property type="evidence" value="ECO:0007669"/>
    <property type="project" value="UniProtKB-SubCell"/>
</dbReference>
<dbReference type="GO" id="GO:0003677">
    <property type="term" value="F:DNA binding"/>
    <property type="evidence" value="ECO:0007669"/>
    <property type="project" value="UniProtKB-KW"/>
</dbReference>
<dbReference type="GO" id="GO:0030261">
    <property type="term" value="P:chromosome condensation"/>
    <property type="evidence" value="ECO:0007669"/>
    <property type="project" value="UniProtKB-KW"/>
</dbReference>
<dbReference type="GO" id="GO:0035092">
    <property type="term" value="P:sperm DNA condensation"/>
    <property type="evidence" value="ECO:0007669"/>
    <property type="project" value="InterPro"/>
</dbReference>
<dbReference type="InterPro" id="IPR000221">
    <property type="entry name" value="Protamine_P1"/>
</dbReference>
<dbReference type="PROSITE" id="PS00048">
    <property type="entry name" value="PROTAMINE_P1"/>
    <property type="match status" value="1"/>
</dbReference>
<accession>P67844</accession>
<accession>P42140</accession>
<accession>P42150</accession>
<accession>P42154</accession>
<protein>
    <recommendedName>
        <fullName>Sperm protamine P1</fullName>
    </recommendedName>
</protein>
<gene>
    <name type="primary">PRM1</name>
</gene>
<keyword id="KW-0158">Chromosome</keyword>
<keyword id="KW-0217">Developmental protein</keyword>
<keyword id="KW-0221">Differentiation</keyword>
<keyword id="KW-0226">DNA condensation</keyword>
<keyword id="KW-0238">DNA-binding</keyword>
<keyword id="KW-0544">Nucleosome core</keyword>
<keyword id="KW-0539">Nucleus</keyword>
<keyword id="KW-0744">Spermatogenesis</keyword>